<comment type="function">
    <text evidence="1">The UvrABC repair system catalyzes the recognition and processing of DNA lesions. UvrC both incises the 5' and 3' sides of the lesion. The N-terminal half is responsible for the 3' incision and the C-terminal half is responsible for the 5' incision.</text>
</comment>
<comment type="subunit">
    <text evidence="1">Interacts with UvrB in an incision complex.</text>
</comment>
<comment type="subcellular location">
    <subcellularLocation>
        <location evidence="1">Cytoplasm</location>
    </subcellularLocation>
</comment>
<comment type="similarity">
    <text evidence="1">Belongs to the UvrC family.</text>
</comment>
<organism>
    <name type="scientific">Borrelia turicatae (strain 91E135)</name>
    <dbReference type="NCBI Taxonomy" id="314724"/>
    <lineage>
        <taxon>Bacteria</taxon>
        <taxon>Pseudomonadati</taxon>
        <taxon>Spirochaetota</taxon>
        <taxon>Spirochaetia</taxon>
        <taxon>Spirochaetales</taxon>
        <taxon>Borreliaceae</taxon>
        <taxon>Borrelia</taxon>
    </lineage>
</organism>
<keyword id="KW-0963">Cytoplasm</keyword>
<keyword id="KW-0227">DNA damage</keyword>
<keyword id="KW-0228">DNA excision</keyword>
<keyword id="KW-0234">DNA repair</keyword>
<keyword id="KW-0267">Excision nuclease</keyword>
<keyword id="KW-1185">Reference proteome</keyword>
<keyword id="KW-0742">SOS response</keyword>
<accession>A1QZP2</accession>
<sequence>MREHLNCLHKKVQEFPTTSGCYKMYSQDNKILYIGKAKNLRSRLKNYFLEKISLKTKILMRNVVNIEVITTNSEYEALLLECNLIKEHKPDYNIKLKDDKGYPMIRITCEKYPKVFKTRKIINDGSEYFGPYVNAKHLDLVLNLINKTFKTRKCKKKSKNPCLYFHMGQCLGVCYRNDLEEQYKEEVNKIRHILNGNISKLLDEIEIKMKEVIKREDFESAIKLKETKRSLIEISQTQIITKINKLSTDYIYIHKTDNLNVIVIFKYKDGKLVEKDINFDESIYEEEELIAEFITQYYTSLNMIVPDKICIFKKIETEDITKLINELKSTNTEIVYEETKDAIKIMEMAISNAEIALKAYNNEKNKALENLKIILEMTKLPKTIEGFDIAHLNGYKTVASLVTFKMGKPFKDGYRVYKINSLNDGEINDFKAIKEIISRRYTKLINEQLELPTLILIDGGKGQLNAAYSILKGLKIEDKVTICALAKQEETIFLPNKTQGIKLPKGNPALKILQNVRDESHRKANSFNRKLRKNIKLNYSKIEGIGEKKAKNILKTLGTYKDIFLLNEDEIAQKMKINIKMAKKIKKFSEDQNLKNTHSIES</sequence>
<proteinExistence type="inferred from homology"/>
<name>UVRC_BORT9</name>
<reference key="1">
    <citation type="submission" date="2004-12" db="EMBL/GenBank/DDBJ databases">
        <title>The genome sequence of Borrelia hermsii and Borrelia turicatae: comparative analysis of two agents of endemic N. America relapsing fever.</title>
        <authorList>
            <person name="Porcella S.F."/>
            <person name="Raffel S.J."/>
            <person name="Schrumpf M.E."/>
            <person name="Montgomery B."/>
            <person name="Smith T."/>
            <person name="Schwan T.G."/>
        </authorList>
    </citation>
    <scope>NUCLEOTIDE SEQUENCE [LARGE SCALE GENOMIC DNA]</scope>
    <source>
        <strain>91E135</strain>
    </source>
</reference>
<dbReference type="EMBL" id="CP000049">
    <property type="protein sequence ID" value="AAX17784.1"/>
    <property type="molecule type" value="Genomic_DNA"/>
</dbReference>
<dbReference type="RefSeq" id="WP_011772403.1">
    <property type="nucleotide sequence ID" value="NC_008710.1"/>
</dbReference>
<dbReference type="SMR" id="A1QZP2"/>
<dbReference type="KEGG" id="btu:BT0457"/>
<dbReference type="eggNOG" id="COG0322">
    <property type="taxonomic scope" value="Bacteria"/>
</dbReference>
<dbReference type="HOGENOM" id="CLU_014841_3_2_12"/>
<dbReference type="Proteomes" id="UP000001205">
    <property type="component" value="Chromosome"/>
</dbReference>
<dbReference type="GO" id="GO:0005737">
    <property type="term" value="C:cytoplasm"/>
    <property type="evidence" value="ECO:0007669"/>
    <property type="project" value="UniProtKB-SubCell"/>
</dbReference>
<dbReference type="GO" id="GO:0009380">
    <property type="term" value="C:excinuclease repair complex"/>
    <property type="evidence" value="ECO:0007669"/>
    <property type="project" value="InterPro"/>
</dbReference>
<dbReference type="GO" id="GO:0003677">
    <property type="term" value="F:DNA binding"/>
    <property type="evidence" value="ECO:0007669"/>
    <property type="project" value="UniProtKB-UniRule"/>
</dbReference>
<dbReference type="GO" id="GO:0009381">
    <property type="term" value="F:excinuclease ABC activity"/>
    <property type="evidence" value="ECO:0007669"/>
    <property type="project" value="UniProtKB-UniRule"/>
</dbReference>
<dbReference type="GO" id="GO:0006289">
    <property type="term" value="P:nucleotide-excision repair"/>
    <property type="evidence" value="ECO:0007669"/>
    <property type="project" value="UniProtKB-UniRule"/>
</dbReference>
<dbReference type="GO" id="GO:0009432">
    <property type="term" value="P:SOS response"/>
    <property type="evidence" value="ECO:0007669"/>
    <property type="project" value="UniProtKB-UniRule"/>
</dbReference>
<dbReference type="CDD" id="cd10434">
    <property type="entry name" value="GIY-YIG_UvrC_Cho"/>
    <property type="match status" value="1"/>
</dbReference>
<dbReference type="FunFam" id="3.40.1440.10:FF:000001">
    <property type="entry name" value="UvrABC system protein C"/>
    <property type="match status" value="1"/>
</dbReference>
<dbReference type="Gene3D" id="1.10.150.20">
    <property type="entry name" value="5' to 3' exonuclease, C-terminal subdomain"/>
    <property type="match status" value="1"/>
</dbReference>
<dbReference type="Gene3D" id="3.40.1440.10">
    <property type="entry name" value="GIY-YIG endonuclease"/>
    <property type="match status" value="1"/>
</dbReference>
<dbReference type="Gene3D" id="3.30.420.340">
    <property type="entry name" value="UvrC, RNAse H endonuclease domain"/>
    <property type="match status" value="1"/>
</dbReference>
<dbReference type="HAMAP" id="MF_00203">
    <property type="entry name" value="UvrC"/>
    <property type="match status" value="1"/>
</dbReference>
<dbReference type="InterPro" id="IPR000305">
    <property type="entry name" value="GIY-YIG_endonuc"/>
</dbReference>
<dbReference type="InterPro" id="IPR035901">
    <property type="entry name" value="GIY-YIG_endonuc_sf"/>
</dbReference>
<dbReference type="InterPro" id="IPR047296">
    <property type="entry name" value="GIY-YIG_UvrC_Cho"/>
</dbReference>
<dbReference type="InterPro" id="IPR010994">
    <property type="entry name" value="RuvA_2-like"/>
</dbReference>
<dbReference type="InterPro" id="IPR036876">
    <property type="entry name" value="UVR_dom_sf"/>
</dbReference>
<dbReference type="InterPro" id="IPR050066">
    <property type="entry name" value="UvrABC_protein_C"/>
</dbReference>
<dbReference type="InterPro" id="IPR004791">
    <property type="entry name" value="UvrC"/>
</dbReference>
<dbReference type="InterPro" id="IPR001162">
    <property type="entry name" value="UvrC_RNase_H_dom"/>
</dbReference>
<dbReference type="InterPro" id="IPR038476">
    <property type="entry name" value="UvrC_RNase_H_dom_sf"/>
</dbReference>
<dbReference type="NCBIfam" id="NF011264">
    <property type="entry name" value="PRK14670.1"/>
    <property type="match status" value="1"/>
</dbReference>
<dbReference type="NCBIfam" id="TIGR00194">
    <property type="entry name" value="uvrC"/>
    <property type="match status" value="1"/>
</dbReference>
<dbReference type="PANTHER" id="PTHR30562:SF1">
    <property type="entry name" value="UVRABC SYSTEM PROTEIN C"/>
    <property type="match status" value="1"/>
</dbReference>
<dbReference type="PANTHER" id="PTHR30562">
    <property type="entry name" value="UVRC/OXIDOREDUCTASE"/>
    <property type="match status" value="1"/>
</dbReference>
<dbReference type="Pfam" id="PF01541">
    <property type="entry name" value="GIY-YIG"/>
    <property type="match status" value="1"/>
</dbReference>
<dbReference type="Pfam" id="PF22920">
    <property type="entry name" value="UvrC_RNaseH"/>
    <property type="match status" value="1"/>
</dbReference>
<dbReference type="Pfam" id="PF08459">
    <property type="entry name" value="UvrC_RNaseH_dom"/>
    <property type="match status" value="1"/>
</dbReference>
<dbReference type="SMART" id="SM00465">
    <property type="entry name" value="GIYc"/>
    <property type="match status" value="1"/>
</dbReference>
<dbReference type="SUPFAM" id="SSF46600">
    <property type="entry name" value="C-terminal UvrC-binding domain of UvrB"/>
    <property type="match status" value="1"/>
</dbReference>
<dbReference type="SUPFAM" id="SSF82771">
    <property type="entry name" value="GIY-YIG endonuclease"/>
    <property type="match status" value="1"/>
</dbReference>
<dbReference type="SUPFAM" id="SSF47781">
    <property type="entry name" value="RuvA domain 2-like"/>
    <property type="match status" value="1"/>
</dbReference>
<dbReference type="PROSITE" id="PS50164">
    <property type="entry name" value="GIY_YIG"/>
    <property type="match status" value="1"/>
</dbReference>
<dbReference type="PROSITE" id="PS50165">
    <property type="entry name" value="UVRC"/>
    <property type="match status" value="1"/>
</dbReference>
<feature type="chain" id="PRO_1000200574" description="UvrABC system protein C">
    <location>
        <begin position="1"/>
        <end position="602"/>
    </location>
</feature>
<feature type="domain" description="GIY-YIG" evidence="1">
    <location>
        <begin position="17"/>
        <end position="94"/>
    </location>
</feature>
<feature type="domain" description="UVR" evidence="1">
    <location>
        <begin position="199"/>
        <end position="234"/>
    </location>
</feature>
<gene>
    <name evidence="1" type="primary">uvrC</name>
    <name type="ordered locus">BT0457</name>
</gene>
<protein>
    <recommendedName>
        <fullName evidence="1">UvrABC system protein C</fullName>
        <shortName evidence="1">Protein UvrC</shortName>
    </recommendedName>
    <alternativeName>
        <fullName evidence="1">Excinuclease ABC subunit C</fullName>
    </alternativeName>
</protein>
<evidence type="ECO:0000255" key="1">
    <source>
        <dbReference type="HAMAP-Rule" id="MF_00203"/>
    </source>
</evidence>